<keyword id="KW-0349">Heme</keyword>
<keyword id="KW-0376">Hydrogen peroxide</keyword>
<keyword id="KW-0408">Iron</keyword>
<keyword id="KW-0479">Metal-binding</keyword>
<keyword id="KW-0560">Oxidoreductase</keyword>
<keyword id="KW-0575">Peroxidase</keyword>
<keyword id="KW-0732">Signal</keyword>
<organism>
    <name type="scientific">Legionella pneumophila (strain Paris)</name>
    <dbReference type="NCBI Taxonomy" id="297246"/>
    <lineage>
        <taxon>Bacteria</taxon>
        <taxon>Pseudomonadati</taxon>
        <taxon>Pseudomonadota</taxon>
        <taxon>Gammaproteobacteria</taxon>
        <taxon>Legionellales</taxon>
        <taxon>Legionellaceae</taxon>
        <taxon>Legionella</taxon>
    </lineage>
</organism>
<evidence type="ECO:0000255" key="1">
    <source>
        <dbReference type="HAMAP-Rule" id="MF_01961"/>
    </source>
</evidence>
<proteinExistence type="inferred from homology"/>
<gene>
    <name evidence="1" type="primary">katG2</name>
    <name type="ordered locus">lpp0252</name>
</gene>
<sequence>MFKRTIPLFAAFTLAISPSVFPNYAYAQEDKPKTNQYWWPKMLDLSPLRQPNATSNPMGEQFNYAEEFNSLDLNAVIEDLKKLMTTSQDWWPADYGNYGPLFIRMSWHAAGTYRIYDGRGGANGGFQRFAPQNSWPDNANLDKARRLLWPIKQKYGRKISWADLLVLAGNVAMESMGFKTIGFAGGREDAWEAININWGPEGKWLESKRQDKDGKLEKPLAATVMGLIYVNPEGPNGVPDPLAAAEKIRETFGRMAMNDEETVALIAGGHAFGKTHGAASGKYLGPAPEAAGIEEQGFGWKNSYGSGKGKDTITSGLEGAWTVTPTHWSHNYLQNLFNFNWVKTKSPGGAIQWVPENSNASSMVPDAFDPSKRHAPVMLTTDLALKFDPVYSKIAKRFLDNPKEFDDAFARAWFKLIHRDMGPRSRYLGSLVPKEIMIWQDPVPPVDYKLVDANDIANLKGKILNSGLSTSELVKTAWASASTFRGTDMRGGANGARIRLSPQKDWPANDPQELAKVLKTLESIQNNFNNAQADGKKISLADLIVLGGNAAIEQAAKQAGYDIIVPFMPGRTDATQGMTDVKSFEVLEPKADGFRNYFDKSNNMSPPEMLVEKASLLKLSVPQMTVLVGGMRVLNANTGQNQYGVFTDKPGTLNNDFFVNLLSMSTEWKKSSETEGIYEGYDRKTGKLKWKATSVDLIFGANSELRAVAEAYATDDAKEKFIQDFVNAWVKVMTADRFDIKAANTNINS</sequence>
<name>KATG2_LEGPA</name>
<protein>
    <recommendedName>
        <fullName evidence="1">Catalase-peroxidase 2</fullName>
        <shortName evidence="1">CP 2</shortName>
        <ecNumber evidence="1">1.11.1.21</ecNumber>
    </recommendedName>
    <alternativeName>
        <fullName evidence="1">Peroxidase/catalase 2</fullName>
    </alternativeName>
</protein>
<feature type="signal peptide" evidence="1">
    <location>
        <begin position="1"/>
        <end position="27"/>
    </location>
</feature>
<feature type="chain" id="PRO_0000354821" description="Catalase-peroxidase 2">
    <location>
        <begin position="28"/>
        <end position="749"/>
    </location>
</feature>
<feature type="active site" description="Proton acceptor" evidence="1">
    <location>
        <position position="108"/>
    </location>
</feature>
<feature type="binding site" description="axial binding residue" evidence="1">
    <location>
        <position position="270"/>
    </location>
    <ligand>
        <name>heme b</name>
        <dbReference type="ChEBI" id="CHEBI:60344"/>
    </ligand>
    <ligandPart>
        <name>Fe</name>
        <dbReference type="ChEBI" id="CHEBI:18248"/>
    </ligandPart>
</feature>
<feature type="site" description="Transition state stabilizer" evidence="1">
    <location>
        <position position="104"/>
    </location>
</feature>
<feature type="cross-link" description="Tryptophyl-tyrosyl-methioninium (Trp-Tyr) (with M-255)" evidence="1">
    <location>
        <begin position="107"/>
        <end position="229"/>
    </location>
</feature>
<feature type="cross-link" description="Tryptophyl-tyrosyl-methioninium (Tyr-Met) (with W-107)" evidence="1">
    <location>
        <begin position="229"/>
        <end position="255"/>
    </location>
</feature>
<comment type="function">
    <text evidence="1">Bifunctional enzyme with both catalase and broad-spectrum peroxidase activity.</text>
</comment>
<comment type="catalytic activity">
    <reaction evidence="1">
        <text>H2O2 + AH2 = A + 2 H2O</text>
        <dbReference type="Rhea" id="RHEA:30275"/>
        <dbReference type="ChEBI" id="CHEBI:13193"/>
        <dbReference type="ChEBI" id="CHEBI:15377"/>
        <dbReference type="ChEBI" id="CHEBI:16240"/>
        <dbReference type="ChEBI" id="CHEBI:17499"/>
        <dbReference type="EC" id="1.11.1.21"/>
    </reaction>
</comment>
<comment type="catalytic activity">
    <reaction evidence="1">
        <text>2 H2O2 = O2 + 2 H2O</text>
        <dbReference type="Rhea" id="RHEA:20309"/>
        <dbReference type="ChEBI" id="CHEBI:15377"/>
        <dbReference type="ChEBI" id="CHEBI:15379"/>
        <dbReference type="ChEBI" id="CHEBI:16240"/>
        <dbReference type="EC" id="1.11.1.21"/>
    </reaction>
</comment>
<comment type="cofactor">
    <cofactor evidence="1">
        <name>heme b</name>
        <dbReference type="ChEBI" id="CHEBI:60344"/>
    </cofactor>
    <text evidence="1">Binds 1 heme b (iron(II)-protoporphyrin IX) group per dimer.</text>
</comment>
<comment type="subunit">
    <text evidence="1">Homodimer or homotetramer.</text>
</comment>
<comment type="PTM">
    <text evidence="1">Formation of the three residue Trp-Tyr-Met cross-link is important for the catalase, but not the peroxidase activity of the enzyme.</text>
</comment>
<comment type="similarity">
    <text evidence="1">Belongs to the peroxidase family. Peroxidase/catalase subfamily.</text>
</comment>
<reference key="1">
    <citation type="journal article" date="2004" name="Nat. Genet.">
        <title>Evidence in the Legionella pneumophila genome for exploitation of host cell functions and high genome plasticity.</title>
        <authorList>
            <person name="Cazalet C."/>
            <person name="Rusniok C."/>
            <person name="Brueggemann H."/>
            <person name="Zidane N."/>
            <person name="Magnier A."/>
            <person name="Ma L."/>
            <person name="Tichit M."/>
            <person name="Jarraud S."/>
            <person name="Bouchier C."/>
            <person name="Vandenesch F."/>
            <person name="Kunst F."/>
            <person name="Etienne J."/>
            <person name="Glaser P."/>
            <person name="Buchrieser C."/>
        </authorList>
    </citation>
    <scope>NUCLEOTIDE SEQUENCE [LARGE SCALE GENOMIC DNA]</scope>
    <source>
        <strain>Paris</strain>
    </source>
</reference>
<accession>Q5X8J8</accession>
<dbReference type="EC" id="1.11.1.21" evidence="1"/>
<dbReference type="EMBL" id="CR628336">
    <property type="protein sequence ID" value="CAH11399.1"/>
    <property type="molecule type" value="Genomic_DNA"/>
</dbReference>
<dbReference type="SMR" id="Q5X8J8"/>
<dbReference type="PeroxiBase" id="2398">
    <property type="entry name" value="LpnCP01_Paris"/>
</dbReference>
<dbReference type="KEGG" id="lpp:lpp0252"/>
<dbReference type="LegioList" id="lpp0252"/>
<dbReference type="HOGENOM" id="CLU_025424_2_0_6"/>
<dbReference type="GO" id="GO:0005829">
    <property type="term" value="C:cytosol"/>
    <property type="evidence" value="ECO:0007669"/>
    <property type="project" value="TreeGrafter"/>
</dbReference>
<dbReference type="GO" id="GO:0004096">
    <property type="term" value="F:catalase activity"/>
    <property type="evidence" value="ECO:0007669"/>
    <property type="project" value="UniProtKB-UniRule"/>
</dbReference>
<dbReference type="GO" id="GO:0020037">
    <property type="term" value="F:heme binding"/>
    <property type="evidence" value="ECO:0007669"/>
    <property type="project" value="InterPro"/>
</dbReference>
<dbReference type="GO" id="GO:0046872">
    <property type="term" value="F:metal ion binding"/>
    <property type="evidence" value="ECO:0007669"/>
    <property type="project" value="UniProtKB-KW"/>
</dbReference>
<dbReference type="GO" id="GO:0070301">
    <property type="term" value="P:cellular response to hydrogen peroxide"/>
    <property type="evidence" value="ECO:0007669"/>
    <property type="project" value="TreeGrafter"/>
</dbReference>
<dbReference type="GO" id="GO:0042744">
    <property type="term" value="P:hydrogen peroxide catabolic process"/>
    <property type="evidence" value="ECO:0007669"/>
    <property type="project" value="UniProtKB-KW"/>
</dbReference>
<dbReference type="CDD" id="cd00649">
    <property type="entry name" value="catalase_peroxidase_1"/>
    <property type="match status" value="1"/>
</dbReference>
<dbReference type="CDD" id="cd08200">
    <property type="entry name" value="catalase_peroxidase_2"/>
    <property type="match status" value="1"/>
</dbReference>
<dbReference type="FunFam" id="1.10.420.10:FF:000002">
    <property type="entry name" value="Catalase-peroxidase"/>
    <property type="match status" value="1"/>
</dbReference>
<dbReference type="FunFam" id="1.10.420.10:FF:000004">
    <property type="entry name" value="Catalase-peroxidase"/>
    <property type="match status" value="1"/>
</dbReference>
<dbReference type="FunFam" id="1.10.520.10:FF:000002">
    <property type="entry name" value="Catalase-peroxidase"/>
    <property type="match status" value="1"/>
</dbReference>
<dbReference type="Gene3D" id="1.10.520.10">
    <property type="match status" value="2"/>
</dbReference>
<dbReference type="Gene3D" id="1.10.420.10">
    <property type="entry name" value="Peroxidase, domain 2"/>
    <property type="match status" value="2"/>
</dbReference>
<dbReference type="HAMAP" id="MF_01961">
    <property type="entry name" value="Catal_peroxid"/>
    <property type="match status" value="1"/>
</dbReference>
<dbReference type="InterPro" id="IPR000763">
    <property type="entry name" value="Catalase_peroxidase"/>
</dbReference>
<dbReference type="InterPro" id="IPR002016">
    <property type="entry name" value="Haem_peroxidase"/>
</dbReference>
<dbReference type="InterPro" id="IPR010255">
    <property type="entry name" value="Haem_peroxidase_sf"/>
</dbReference>
<dbReference type="InterPro" id="IPR019794">
    <property type="entry name" value="Peroxidases_AS"/>
</dbReference>
<dbReference type="InterPro" id="IPR019793">
    <property type="entry name" value="Peroxidases_heam-ligand_BS"/>
</dbReference>
<dbReference type="NCBIfam" id="TIGR00198">
    <property type="entry name" value="cat_per_HPI"/>
    <property type="match status" value="1"/>
</dbReference>
<dbReference type="NCBIfam" id="NF011635">
    <property type="entry name" value="PRK15061.1"/>
    <property type="match status" value="1"/>
</dbReference>
<dbReference type="PANTHER" id="PTHR30555:SF0">
    <property type="entry name" value="CATALASE-PEROXIDASE"/>
    <property type="match status" value="1"/>
</dbReference>
<dbReference type="PANTHER" id="PTHR30555">
    <property type="entry name" value="HYDROPEROXIDASE I, BIFUNCTIONAL CATALASE-PEROXIDASE"/>
    <property type="match status" value="1"/>
</dbReference>
<dbReference type="Pfam" id="PF00141">
    <property type="entry name" value="peroxidase"/>
    <property type="match status" value="2"/>
</dbReference>
<dbReference type="PRINTS" id="PR00460">
    <property type="entry name" value="BPEROXIDASE"/>
</dbReference>
<dbReference type="PRINTS" id="PR00458">
    <property type="entry name" value="PEROXIDASE"/>
</dbReference>
<dbReference type="SUPFAM" id="SSF48113">
    <property type="entry name" value="Heme-dependent peroxidases"/>
    <property type="match status" value="2"/>
</dbReference>
<dbReference type="PROSITE" id="PS00435">
    <property type="entry name" value="PEROXIDASE_1"/>
    <property type="match status" value="1"/>
</dbReference>
<dbReference type="PROSITE" id="PS00436">
    <property type="entry name" value="PEROXIDASE_2"/>
    <property type="match status" value="1"/>
</dbReference>
<dbReference type="PROSITE" id="PS50873">
    <property type="entry name" value="PEROXIDASE_4"/>
    <property type="match status" value="1"/>
</dbReference>